<sequence>MKDVVLVKSLYRNTSEYSDKKVKISGWIRTLRASNAFGFIEVNDGSFFKNVQVVFDSAKISNYKEISKLPISSSISVIGTLVETPDSKQPFEIQAEEIIVEGMSDSDYPLQKKRHTFEYLRTIAHLRPRSNAFSATFRVRSVAAYAIHKFFQDQGFVYTHTPILTGSDCEGAGEMFRVTTLDMMAPPIAEEGGIDFSQDFFGKETNLTVSGQLNAECFALAFRNIYTFGPTFRAENSNTVKHAAEFWMIEPEMAFADLIDDMEVAENMLKYVIKYVMDECPEEIAFFNQFVDKGLLERLNHVVNSEFGKVTYTEAVKLLQESGKEFEYPVEWGIDLQTEHERYLTEQIFKKPVFVTDYPKDIKAFYMRLNEDGKTVAAMDCLVPGIGEIIGGSQREERLDVLKARMAELNLNEEDYWWYLELRKYGETVHSGFGLGFERLIMYITGMANIRDVIPFPRTTGTAEF</sequence>
<protein>
    <recommendedName>
        <fullName evidence="1">Asparagine--tRNA ligase</fullName>
        <ecNumber evidence="1">6.1.1.22</ecNumber>
    </recommendedName>
    <alternativeName>
        <fullName evidence="1">Asparaginyl-tRNA synthetase</fullName>
        <shortName evidence="1">AsnRS</shortName>
    </alternativeName>
</protein>
<evidence type="ECO:0000255" key="1">
    <source>
        <dbReference type="HAMAP-Rule" id="MF_00534"/>
    </source>
</evidence>
<comment type="catalytic activity">
    <reaction evidence="1">
        <text>tRNA(Asn) + L-asparagine + ATP = L-asparaginyl-tRNA(Asn) + AMP + diphosphate + H(+)</text>
        <dbReference type="Rhea" id="RHEA:11180"/>
        <dbReference type="Rhea" id="RHEA-COMP:9659"/>
        <dbReference type="Rhea" id="RHEA-COMP:9674"/>
        <dbReference type="ChEBI" id="CHEBI:15378"/>
        <dbReference type="ChEBI" id="CHEBI:30616"/>
        <dbReference type="ChEBI" id="CHEBI:33019"/>
        <dbReference type="ChEBI" id="CHEBI:58048"/>
        <dbReference type="ChEBI" id="CHEBI:78442"/>
        <dbReference type="ChEBI" id="CHEBI:78515"/>
        <dbReference type="ChEBI" id="CHEBI:456215"/>
        <dbReference type="EC" id="6.1.1.22"/>
    </reaction>
</comment>
<comment type="subunit">
    <text evidence="1">Homodimer.</text>
</comment>
<comment type="subcellular location">
    <subcellularLocation>
        <location evidence="1">Cytoplasm</location>
    </subcellularLocation>
</comment>
<comment type="similarity">
    <text evidence="1">Belongs to the class-II aminoacyl-tRNA synthetase family.</text>
</comment>
<gene>
    <name evidence="1" type="primary">asnS</name>
    <name type="ordered locus">CPE2500</name>
</gene>
<reference key="1">
    <citation type="journal article" date="2002" name="Proc. Natl. Acad. Sci. U.S.A.">
        <title>Complete genome sequence of Clostridium perfringens, an anaerobic flesh-eater.</title>
        <authorList>
            <person name="Shimizu T."/>
            <person name="Ohtani K."/>
            <person name="Hirakawa H."/>
            <person name="Ohshima K."/>
            <person name="Yamashita A."/>
            <person name="Shiba T."/>
            <person name="Ogasawara N."/>
            <person name="Hattori M."/>
            <person name="Kuhara S."/>
            <person name="Hayashi H."/>
        </authorList>
    </citation>
    <scope>NUCLEOTIDE SEQUENCE [LARGE SCALE GENOMIC DNA]</scope>
    <source>
        <strain>13 / Type A</strain>
    </source>
</reference>
<accession>P58693</accession>
<proteinExistence type="inferred from homology"/>
<dbReference type="EC" id="6.1.1.22" evidence="1"/>
<dbReference type="EMBL" id="BA000016">
    <property type="protein sequence ID" value="BAB82206.1"/>
    <property type="molecule type" value="Genomic_DNA"/>
</dbReference>
<dbReference type="RefSeq" id="WP_003450738.1">
    <property type="nucleotide sequence ID" value="NC_003366.1"/>
</dbReference>
<dbReference type="SMR" id="P58693"/>
<dbReference type="STRING" id="195102.gene:10491834"/>
<dbReference type="GeneID" id="93000896"/>
<dbReference type="KEGG" id="cpe:CPE2500"/>
<dbReference type="HOGENOM" id="CLU_004553_2_0_9"/>
<dbReference type="Proteomes" id="UP000000818">
    <property type="component" value="Chromosome"/>
</dbReference>
<dbReference type="GO" id="GO:0005737">
    <property type="term" value="C:cytoplasm"/>
    <property type="evidence" value="ECO:0007669"/>
    <property type="project" value="UniProtKB-SubCell"/>
</dbReference>
<dbReference type="GO" id="GO:0004816">
    <property type="term" value="F:asparagine-tRNA ligase activity"/>
    <property type="evidence" value="ECO:0007669"/>
    <property type="project" value="UniProtKB-UniRule"/>
</dbReference>
<dbReference type="GO" id="GO:0005524">
    <property type="term" value="F:ATP binding"/>
    <property type="evidence" value="ECO:0007669"/>
    <property type="project" value="UniProtKB-UniRule"/>
</dbReference>
<dbReference type="GO" id="GO:0140096">
    <property type="term" value="F:catalytic activity, acting on a protein"/>
    <property type="evidence" value="ECO:0007669"/>
    <property type="project" value="UniProtKB-ARBA"/>
</dbReference>
<dbReference type="GO" id="GO:0003676">
    <property type="term" value="F:nucleic acid binding"/>
    <property type="evidence" value="ECO:0007669"/>
    <property type="project" value="InterPro"/>
</dbReference>
<dbReference type="GO" id="GO:0016740">
    <property type="term" value="F:transferase activity"/>
    <property type="evidence" value="ECO:0007669"/>
    <property type="project" value="UniProtKB-ARBA"/>
</dbReference>
<dbReference type="GO" id="GO:0006421">
    <property type="term" value="P:asparaginyl-tRNA aminoacylation"/>
    <property type="evidence" value="ECO:0007669"/>
    <property type="project" value="UniProtKB-UniRule"/>
</dbReference>
<dbReference type="CDD" id="cd00776">
    <property type="entry name" value="AsxRS_core"/>
    <property type="match status" value="1"/>
</dbReference>
<dbReference type="CDD" id="cd04318">
    <property type="entry name" value="EcAsnRS_like_N"/>
    <property type="match status" value="1"/>
</dbReference>
<dbReference type="FunFam" id="3.30.930.10:FF:000016">
    <property type="entry name" value="Asparagine--tRNA ligase"/>
    <property type="match status" value="1"/>
</dbReference>
<dbReference type="Gene3D" id="3.30.930.10">
    <property type="entry name" value="Bira Bifunctional Protein, Domain 2"/>
    <property type="match status" value="1"/>
</dbReference>
<dbReference type="Gene3D" id="2.40.50.140">
    <property type="entry name" value="Nucleic acid-binding proteins"/>
    <property type="match status" value="1"/>
</dbReference>
<dbReference type="HAMAP" id="MF_00534">
    <property type="entry name" value="Asn_tRNA_synth"/>
    <property type="match status" value="1"/>
</dbReference>
<dbReference type="InterPro" id="IPR004364">
    <property type="entry name" value="Aa-tRNA-synt_II"/>
</dbReference>
<dbReference type="InterPro" id="IPR006195">
    <property type="entry name" value="aa-tRNA-synth_II"/>
</dbReference>
<dbReference type="InterPro" id="IPR045864">
    <property type="entry name" value="aa-tRNA-synth_II/BPL/LPL"/>
</dbReference>
<dbReference type="InterPro" id="IPR004522">
    <property type="entry name" value="Asn-tRNA-ligase"/>
</dbReference>
<dbReference type="InterPro" id="IPR002312">
    <property type="entry name" value="Asp/Asn-tRNA-synth_IIb"/>
</dbReference>
<dbReference type="InterPro" id="IPR012340">
    <property type="entry name" value="NA-bd_OB-fold"/>
</dbReference>
<dbReference type="InterPro" id="IPR004365">
    <property type="entry name" value="NA-bd_OB_tRNA"/>
</dbReference>
<dbReference type="NCBIfam" id="TIGR00457">
    <property type="entry name" value="asnS"/>
    <property type="match status" value="1"/>
</dbReference>
<dbReference type="NCBIfam" id="NF003037">
    <property type="entry name" value="PRK03932.1"/>
    <property type="match status" value="1"/>
</dbReference>
<dbReference type="PANTHER" id="PTHR22594:SF34">
    <property type="entry name" value="ASPARAGINE--TRNA LIGASE, MITOCHONDRIAL-RELATED"/>
    <property type="match status" value="1"/>
</dbReference>
<dbReference type="PANTHER" id="PTHR22594">
    <property type="entry name" value="ASPARTYL/LYSYL-TRNA SYNTHETASE"/>
    <property type="match status" value="1"/>
</dbReference>
<dbReference type="Pfam" id="PF00152">
    <property type="entry name" value="tRNA-synt_2"/>
    <property type="match status" value="1"/>
</dbReference>
<dbReference type="Pfam" id="PF01336">
    <property type="entry name" value="tRNA_anti-codon"/>
    <property type="match status" value="1"/>
</dbReference>
<dbReference type="PRINTS" id="PR01042">
    <property type="entry name" value="TRNASYNTHASP"/>
</dbReference>
<dbReference type="SUPFAM" id="SSF55681">
    <property type="entry name" value="Class II aaRS and biotin synthetases"/>
    <property type="match status" value="1"/>
</dbReference>
<dbReference type="SUPFAM" id="SSF50249">
    <property type="entry name" value="Nucleic acid-binding proteins"/>
    <property type="match status" value="1"/>
</dbReference>
<dbReference type="PROSITE" id="PS50862">
    <property type="entry name" value="AA_TRNA_LIGASE_II"/>
    <property type="match status" value="1"/>
</dbReference>
<feature type="chain" id="PRO_0000176402" description="Asparagine--tRNA ligase">
    <location>
        <begin position="1"/>
        <end position="465"/>
    </location>
</feature>
<name>SYN_CLOPE</name>
<keyword id="KW-0030">Aminoacyl-tRNA synthetase</keyword>
<keyword id="KW-0067">ATP-binding</keyword>
<keyword id="KW-0963">Cytoplasm</keyword>
<keyword id="KW-0436">Ligase</keyword>
<keyword id="KW-0547">Nucleotide-binding</keyword>
<keyword id="KW-0648">Protein biosynthesis</keyword>
<keyword id="KW-1185">Reference proteome</keyword>
<organism>
    <name type="scientific">Clostridium perfringens (strain 13 / Type A)</name>
    <dbReference type="NCBI Taxonomy" id="195102"/>
    <lineage>
        <taxon>Bacteria</taxon>
        <taxon>Bacillati</taxon>
        <taxon>Bacillota</taxon>
        <taxon>Clostridia</taxon>
        <taxon>Eubacteriales</taxon>
        <taxon>Clostridiaceae</taxon>
        <taxon>Clostridium</taxon>
    </lineage>
</organism>